<comment type="function">
    <text evidence="1">Isomerizes L-alanine to D-alanine which is then oxidized to pyruvate by DadA.</text>
</comment>
<comment type="catalytic activity">
    <reaction>
        <text>L-alanine = D-alanine</text>
        <dbReference type="Rhea" id="RHEA:20249"/>
        <dbReference type="ChEBI" id="CHEBI:57416"/>
        <dbReference type="ChEBI" id="CHEBI:57972"/>
        <dbReference type="EC" id="5.1.1.1"/>
    </reaction>
</comment>
<comment type="cofactor">
    <cofactor evidence="1">
        <name>pyridoxal 5'-phosphate</name>
        <dbReference type="ChEBI" id="CHEBI:597326"/>
    </cofactor>
</comment>
<comment type="similarity">
    <text evidence="2">Belongs to the alanine racemase family.</text>
</comment>
<reference key="1">
    <citation type="journal article" date="2001" name="Nature">
        <title>Complete genome sequence of a multiple drug resistant Salmonella enterica serovar Typhi CT18.</title>
        <authorList>
            <person name="Parkhill J."/>
            <person name="Dougan G."/>
            <person name="James K.D."/>
            <person name="Thomson N.R."/>
            <person name="Pickard D."/>
            <person name="Wain J."/>
            <person name="Churcher C.M."/>
            <person name="Mungall K.L."/>
            <person name="Bentley S.D."/>
            <person name="Holden M.T.G."/>
            <person name="Sebaihia M."/>
            <person name="Baker S."/>
            <person name="Basham D."/>
            <person name="Brooks K."/>
            <person name="Chillingworth T."/>
            <person name="Connerton P."/>
            <person name="Cronin A."/>
            <person name="Davis P."/>
            <person name="Davies R.M."/>
            <person name="Dowd L."/>
            <person name="White N."/>
            <person name="Farrar J."/>
            <person name="Feltwell T."/>
            <person name="Hamlin N."/>
            <person name="Haque A."/>
            <person name="Hien T.T."/>
            <person name="Holroyd S."/>
            <person name="Jagels K."/>
            <person name="Krogh A."/>
            <person name="Larsen T.S."/>
            <person name="Leather S."/>
            <person name="Moule S."/>
            <person name="O'Gaora P."/>
            <person name="Parry C."/>
            <person name="Quail M.A."/>
            <person name="Rutherford K.M."/>
            <person name="Simmonds M."/>
            <person name="Skelton J."/>
            <person name="Stevens K."/>
            <person name="Whitehead S."/>
            <person name="Barrell B.G."/>
        </authorList>
    </citation>
    <scope>NUCLEOTIDE SEQUENCE [LARGE SCALE GENOMIC DNA]</scope>
    <source>
        <strain>CT18</strain>
    </source>
</reference>
<reference key="2">
    <citation type="journal article" date="2003" name="J. Bacteriol.">
        <title>Comparative genomics of Salmonella enterica serovar Typhi strains Ty2 and CT18.</title>
        <authorList>
            <person name="Deng W."/>
            <person name="Liou S.-R."/>
            <person name="Plunkett G. III"/>
            <person name="Mayhew G.F."/>
            <person name="Rose D.J."/>
            <person name="Burland V."/>
            <person name="Kodoyianni V."/>
            <person name="Schwartz D.C."/>
            <person name="Blattner F.R."/>
        </authorList>
    </citation>
    <scope>NUCLEOTIDE SEQUENCE [LARGE SCALE GENOMIC DNA]</scope>
    <source>
        <strain>ATCC 700931 / Ty2</strain>
    </source>
</reference>
<evidence type="ECO:0000250" key="1"/>
<evidence type="ECO:0000305" key="2"/>
<name>ALR2_SALTI</name>
<dbReference type="EC" id="5.1.1.1"/>
<dbReference type="EMBL" id="AL513382">
    <property type="protein sequence ID" value="CAD05485.1"/>
    <property type="molecule type" value="Genomic_DNA"/>
</dbReference>
<dbReference type="EMBL" id="AE014613">
    <property type="protein sequence ID" value="AAO68741.1"/>
    <property type="molecule type" value="Genomic_DNA"/>
</dbReference>
<dbReference type="RefSeq" id="NP_456309.1">
    <property type="nucleotide sequence ID" value="NC_003198.1"/>
</dbReference>
<dbReference type="RefSeq" id="WP_000197904.1">
    <property type="nucleotide sequence ID" value="NZ_WSUR01000004.1"/>
</dbReference>
<dbReference type="SMR" id="Q8Z688"/>
<dbReference type="STRING" id="220341.gene:17585850"/>
<dbReference type="KEGG" id="stt:t1075"/>
<dbReference type="KEGG" id="sty:STY1930"/>
<dbReference type="PATRIC" id="fig|220341.7.peg.1947"/>
<dbReference type="eggNOG" id="COG0787">
    <property type="taxonomic scope" value="Bacteria"/>
</dbReference>
<dbReference type="HOGENOM" id="CLU_028393_1_0_6"/>
<dbReference type="OMA" id="CREVWIE"/>
<dbReference type="OrthoDB" id="9813814at2"/>
<dbReference type="Proteomes" id="UP000000541">
    <property type="component" value="Chromosome"/>
</dbReference>
<dbReference type="Proteomes" id="UP000002670">
    <property type="component" value="Chromosome"/>
</dbReference>
<dbReference type="GO" id="GO:0005829">
    <property type="term" value="C:cytosol"/>
    <property type="evidence" value="ECO:0007669"/>
    <property type="project" value="TreeGrafter"/>
</dbReference>
<dbReference type="GO" id="GO:0008784">
    <property type="term" value="F:alanine racemase activity"/>
    <property type="evidence" value="ECO:0007669"/>
    <property type="project" value="UniProtKB-UniRule"/>
</dbReference>
<dbReference type="GO" id="GO:0030170">
    <property type="term" value="F:pyridoxal phosphate binding"/>
    <property type="evidence" value="ECO:0007669"/>
    <property type="project" value="UniProtKB-UniRule"/>
</dbReference>
<dbReference type="GO" id="GO:0030632">
    <property type="term" value="P:D-alanine biosynthetic process"/>
    <property type="evidence" value="ECO:0007669"/>
    <property type="project" value="UniProtKB-UniRule"/>
</dbReference>
<dbReference type="CDD" id="cd06827">
    <property type="entry name" value="PLPDE_III_AR_proteobact"/>
    <property type="match status" value="1"/>
</dbReference>
<dbReference type="FunFam" id="2.40.37.10:FF:000002">
    <property type="entry name" value="Alanine racemase"/>
    <property type="match status" value="1"/>
</dbReference>
<dbReference type="FunFam" id="3.20.20.10:FF:000002">
    <property type="entry name" value="Alanine racemase"/>
    <property type="match status" value="1"/>
</dbReference>
<dbReference type="Gene3D" id="3.20.20.10">
    <property type="entry name" value="Alanine racemase"/>
    <property type="match status" value="1"/>
</dbReference>
<dbReference type="Gene3D" id="2.40.37.10">
    <property type="entry name" value="Lyase, Ornithine Decarboxylase, Chain A, domain 1"/>
    <property type="match status" value="1"/>
</dbReference>
<dbReference type="HAMAP" id="MF_01201">
    <property type="entry name" value="Ala_racemase"/>
    <property type="match status" value="1"/>
</dbReference>
<dbReference type="InterPro" id="IPR000821">
    <property type="entry name" value="Ala_racemase"/>
</dbReference>
<dbReference type="InterPro" id="IPR009006">
    <property type="entry name" value="Ala_racemase/Decarboxylase_C"/>
</dbReference>
<dbReference type="InterPro" id="IPR011079">
    <property type="entry name" value="Ala_racemase_C"/>
</dbReference>
<dbReference type="InterPro" id="IPR001608">
    <property type="entry name" value="Ala_racemase_N"/>
</dbReference>
<dbReference type="InterPro" id="IPR020622">
    <property type="entry name" value="Ala_racemase_pyridoxalP-BS"/>
</dbReference>
<dbReference type="InterPro" id="IPR029066">
    <property type="entry name" value="PLP-binding_barrel"/>
</dbReference>
<dbReference type="NCBIfam" id="TIGR00492">
    <property type="entry name" value="alr"/>
    <property type="match status" value="1"/>
</dbReference>
<dbReference type="NCBIfam" id="NF002970">
    <property type="entry name" value="PRK03646.1"/>
    <property type="match status" value="1"/>
</dbReference>
<dbReference type="PANTHER" id="PTHR30511">
    <property type="entry name" value="ALANINE RACEMASE"/>
    <property type="match status" value="1"/>
</dbReference>
<dbReference type="PANTHER" id="PTHR30511:SF0">
    <property type="entry name" value="ALANINE RACEMASE, CATABOLIC-RELATED"/>
    <property type="match status" value="1"/>
</dbReference>
<dbReference type="Pfam" id="PF00842">
    <property type="entry name" value="Ala_racemase_C"/>
    <property type="match status" value="1"/>
</dbReference>
<dbReference type="Pfam" id="PF01168">
    <property type="entry name" value="Ala_racemase_N"/>
    <property type="match status" value="1"/>
</dbReference>
<dbReference type="PRINTS" id="PR00992">
    <property type="entry name" value="ALARACEMASE"/>
</dbReference>
<dbReference type="SMART" id="SM01005">
    <property type="entry name" value="Ala_racemase_C"/>
    <property type="match status" value="1"/>
</dbReference>
<dbReference type="SUPFAM" id="SSF50621">
    <property type="entry name" value="Alanine racemase C-terminal domain-like"/>
    <property type="match status" value="1"/>
</dbReference>
<dbReference type="SUPFAM" id="SSF51419">
    <property type="entry name" value="PLP-binding barrel"/>
    <property type="match status" value="1"/>
</dbReference>
<dbReference type="PROSITE" id="PS00395">
    <property type="entry name" value="ALANINE_RACEMASE"/>
    <property type="match status" value="1"/>
</dbReference>
<protein>
    <recommendedName>
        <fullName>Alanine racemase, catabolic</fullName>
        <ecNumber>5.1.1.1</ecNumber>
    </recommendedName>
</protein>
<organism>
    <name type="scientific">Salmonella typhi</name>
    <dbReference type="NCBI Taxonomy" id="90370"/>
    <lineage>
        <taxon>Bacteria</taxon>
        <taxon>Pseudomonadati</taxon>
        <taxon>Pseudomonadota</taxon>
        <taxon>Gammaproteobacteria</taxon>
        <taxon>Enterobacterales</taxon>
        <taxon>Enterobacteriaceae</taxon>
        <taxon>Salmonella</taxon>
    </lineage>
</organism>
<sequence length="356" mass="38732">MTRPIQASLDLQVMKQNLAIVRRAAPEARVWSVVKANAYGHGIERVWSALGATDGFAMLNLEEAITLRERGWKGPILMLEGFFHAQDLEAYDTYRLTTCIHSNWQLKALQNARLNAPLDIYVKVNSGMNRLGFQPERAQTVWQQLRAMRNVGEMTLMSHFAQADHPEGIGEAMRRIALATEGLQCAYSLSNSAATLWHPQAHYDWVRPGIILYGASPSGQWRDIADTGLKPVMTLSSEIIGVQTLSAGERVGYGGGYSVTQEQRIGIVAAGYADGYPRHAPTGTPVLVDGIRTRTVGTVSMDMLAVDLTPCPQAGIGTPVELWGKEIKVDDVASAAGTLGYGLLCAVAPRVPFVTT</sequence>
<gene>
    <name type="primary">dadX</name>
    <name type="synonym">dadB</name>
    <name type="ordered locus">STY1930</name>
    <name type="ordered locus">t1075</name>
</gene>
<proteinExistence type="inferred from homology"/>
<feature type="chain" id="PRO_0000114560" description="Alanine racemase, catabolic">
    <location>
        <begin position="1"/>
        <end position="356"/>
    </location>
</feature>
<feature type="active site" description="Proton acceptor; specific for D-alanine" evidence="1">
    <location>
        <position position="35"/>
    </location>
</feature>
<feature type="active site" description="Proton acceptor; specific for L-alanine" evidence="1">
    <location>
        <position position="253"/>
    </location>
</feature>
<feature type="binding site" evidence="1">
    <location>
        <position position="130"/>
    </location>
    <ligand>
        <name>substrate</name>
    </ligand>
</feature>
<feature type="binding site" evidence="1">
    <location>
        <position position="301"/>
    </location>
    <ligand>
        <name>substrate</name>
    </ligand>
</feature>
<feature type="modified residue" description="N6-(pyridoxal phosphate)lysine" evidence="1">
    <location>
        <position position="35"/>
    </location>
</feature>
<accession>Q8Z688</accession>
<keyword id="KW-0413">Isomerase</keyword>
<keyword id="KW-0663">Pyridoxal phosphate</keyword>